<dbReference type="EC" id="4.3.2.10" evidence="1"/>
<dbReference type="EC" id="3.5.1.2" evidence="1"/>
<dbReference type="EMBL" id="AE017333">
    <property type="protein sequence ID" value="AAU42553.1"/>
    <property type="molecule type" value="Genomic_DNA"/>
</dbReference>
<dbReference type="EMBL" id="CP000002">
    <property type="protein sequence ID" value="AAU25182.1"/>
    <property type="molecule type" value="Genomic_DNA"/>
</dbReference>
<dbReference type="RefSeq" id="WP_011198344.1">
    <property type="nucleotide sequence ID" value="NC_006322.1"/>
</dbReference>
<dbReference type="SMR" id="Q65EG1"/>
<dbReference type="STRING" id="279010.BL03410"/>
<dbReference type="GeneID" id="92859688"/>
<dbReference type="KEGG" id="bld:BLi03734"/>
<dbReference type="KEGG" id="bli:BL03410"/>
<dbReference type="PATRIC" id="fig|279010.13.peg.3800"/>
<dbReference type="eggNOG" id="COG0118">
    <property type="taxonomic scope" value="Bacteria"/>
</dbReference>
<dbReference type="HOGENOM" id="CLU_071837_2_2_9"/>
<dbReference type="UniPathway" id="UPA00031">
    <property type="reaction ID" value="UER00010"/>
</dbReference>
<dbReference type="Proteomes" id="UP000000606">
    <property type="component" value="Chromosome"/>
</dbReference>
<dbReference type="GO" id="GO:0005737">
    <property type="term" value="C:cytoplasm"/>
    <property type="evidence" value="ECO:0007669"/>
    <property type="project" value="UniProtKB-SubCell"/>
</dbReference>
<dbReference type="GO" id="GO:0004359">
    <property type="term" value="F:glutaminase activity"/>
    <property type="evidence" value="ECO:0007669"/>
    <property type="project" value="UniProtKB-EC"/>
</dbReference>
<dbReference type="GO" id="GO:0000107">
    <property type="term" value="F:imidazoleglycerol-phosphate synthase activity"/>
    <property type="evidence" value="ECO:0007669"/>
    <property type="project" value="UniProtKB-UniRule"/>
</dbReference>
<dbReference type="GO" id="GO:0016829">
    <property type="term" value="F:lyase activity"/>
    <property type="evidence" value="ECO:0007669"/>
    <property type="project" value="UniProtKB-KW"/>
</dbReference>
<dbReference type="GO" id="GO:0000105">
    <property type="term" value="P:L-histidine biosynthetic process"/>
    <property type="evidence" value="ECO:0007669"/>
    <property type="project" value="UniProtKB-UniRule"/>
</dbReference>
<dbReference type="CDD" id="cd01748">
    <property type="entry name" value="GATase1_IGP_Synthase"/>
    <property type="match status" value="1"/>
</dbReference>
<dbReference type="Gene3D" id="3.40.50.880">
    <property type="match status" value="1"/>
</dbReference>
<dbReference type="HAMAP" id="MF_00278">
    <property type="entry name" value="HisH"/>
    <property type="match status" value="1"/>
</dbReference>
<dbReference type="InterPro" id="IPR029062">
    <property type="entry name" value="Class_I_gatase-like"/>
</dbReference>
<dbReference type="InterPro" id="IPR017926">
    <property type="entry name" value="GATASE"/>
</dbReference>
<dbReference type="InterPro" id="IPR010139">
    <property type="entry name" value="Imidazole-glycPsynth_HisH"/>
</dbReference>
<dbReference type="NCBIfam" id="TIGR01855">
    <property type="entry name" value="IMP_synth_hisH"/>
    <property type="match status" value="1"/>
</dbReference>
<dbReference type="PANTHER" id="PTHR42701">
    <property type="entry name" value="IMIDAZOLE GLYCEROL PHOSPHATE SYNTHASE SUBUNIT HISH"/>
    <property type="match status" value="1"/>
</dbReference>
<dbReference type="PANTHER" id="PTHR42701:SF1">
    <property type="entry name" value="IMIDAZOLE GLYCEROL PHOSPHATE SYNTHASE SUBUNIT HISH"/>
    <property type="match status" value="1"/>
</dbReference>
<dbReference type="Pfam" id="PF00117">
    <property type="entry name" value="GATase"/>
    <property type="match status" value="1"/>
</dbReference>
<dbReference type="PIRSF" id="PIRSF000495">
    <property type="entry name" value="Amidotransf_hisH"/>
    <property type="match status" value="1"/>
</dbReference>
<dbReference type="SUPFAM" id="SSF52317">
    <property type="entry name" value="Class I glutamine amidotransferase-like"/>
    <property type="match status" value="1"/>
</dbReference>
<dbReference type="PROSITE" id="PS51273">
    <property type="entry name" value="GATASE_TYPE_1"/>
    <property type="match status" value="1"/>
</dbReference>
<reference key="1">
    <citation type="journal article" date="2004" name="J. Mol. Microbiol. Biotechnol.">
        <title>The complete genome sequence of Bacillus licheniformis DSM13, an organism with great industrial potential.</title>
        <authorList>
            <person name="Veith B."/>
            <person name="Herzberg C."/>
            <person name="Steckel S."/>
            <person name="Feesche J."/>
            <person name="Maurer K.H."/>
            <person name="Ehrenreich P."/>
            <person name="Baeumer S."/>
            <person name="Henne A."/>
            <person name="Liesegang H."/>
            <person name="Merkl R."/>
            <person name="Ehrenreich A."/>
            <person name="Gottschalk G."/>
        </authorList>
    </citation>
    <scope>NUCLEOTIDE SEQUENCE [LARGE SCALE GENOMIC DNA]</scope>
    <source>
        <strain>ATCC 14580 / DSM 13 / JCM 2505 / CCUG 7422 / NBRC 12200 / NCIMB 9375 / NCTC 10341 / NRRL NRS-1264 / Gibson 46</strain>
    </source>
</reference>
<reference key="2">
    <citation type="journal article" date="2004" name="Genome Biol.">
        <title>Complete genome sequence of the industrial bacterium Bacillus licheniformis and comparisons with closely related Bacillus species.</title>
        <authorList>
            <person name="Rey M.W."/>
            <person name="Ramaiya P."/>
            <person name="Nelson B.A."/>
            <person name="Brody-Karpin S.D."/>
            <person name="Zaretsky E.J."/>
            <person name="Tang M."/>
            <person name="Lopez de Leon A."/>
            <person name="Xiang H."/>
            <person name="Gusti V."/>
            <person name="Clausen I.G."/>
            <person name="Olsen P.B."/>
            <person name="Rasmussen M.D."/>
            <person name="Andersen J.T."/>
            <person name="Joergensen P.L."/>
            <person name="Larsen T.S."/>
            <person name="Sorokin A."/>
            <person name="Bolotin A."/>
            <person name="Lapidus A."/>
            <person name="Galleron N."/>
            <person name="Ehrlich S.D."/>
            <person name="Berka R.M."/>
        </authorList>
    </citation>
    <scope>NUCLEOTIDE SEQUENCE [LARGE SCALE GENOMIC DNA]</scope>
    <source>
        <strain>ATCC 14580 / DSM 13 / JCM 2505 / CCUG 7422 / NBRC 12200 / NCIMB 9375 / NCTC 10341 / NRRL NRS-1264 / Gibson 46</strain>
    </source>
</reference>
<evidence type="ECO:0000255" key="1">
    <source>
        <dbReference type="HAMAP-Rule" id="MF_00278"/>
    </source>
</evidence>
<organism>
    <name type="scientific">Bacillus licheniformis (strain ATCC 14580 / DSM 13 / JCM 2505 / CCUG 7422 / NBRC 12200 / NCIMB 9375 / NCTC 10341 / NRRL NRS-1264 / Gibson 46)</name>
    <dbReference type="NCBI Taxonomy" id="279010"/>
    <lineage>
        <taxon>Bacteria</taxon>
        <taxon>Bacillati</taxon>
        <taxon>Bacillota</taxon>
        <taxon>Bacilli</taxon>
        <taxon>Bacillales</taxon>
        <taxon>Bacillaceae</taxon>
        <taxon>Bacillus</taxon>
    </lineage>
</organism>
<keyword id="KW-0028">Amino-acid biosynthesis</keyword>
<keyword id="KW-0963">Cytoplasm</keyword>
<keyword id="KW-0315">Glutamine amidotransferase</keyword>
<keyword id="KW-0368">Histidine biosynthesis</keyword>
<keyword id="KW-0378">Hydrolase</keyword>
<keyword id="KW-0456">Lyase</keyword>
<keyword id="KW-1185">Reference proteome</keyword>
<accession>Q65EG1</accession>
<accession>Q62PX9</accession>
<sequence length="212" mass="23308">MIGVIDYGMGNLYSVSKALERIDAPYFVSEHPDELKRADSYILPGVGAFRDAMEILTENGLKTFIQAAANEGKPLLGICLGMQLLFEESEEHGASEGLGLLKGKVVKLKDCDQAGNRLKVPHMGWNLLKVHRDSPLLPKAKEGFAYFVHSYYVSGIEEEALLASAEYGVCVPAVVGLGNVYGAQFHPEKSSTVGMLILERFKQFTQEQKVKK</sequence>
<comment type="function">
    <text evidence="1">IGPS catalyzes the conversion of PRFAR and glutamine to IGP, AICAR and glutamate. The HisH subunit catalyzes the hydrolysis of glutamine to glutamate and ammonia as part of the synthesis of IGP and AICAR. The resulting ammonia molecule is channeled to the active site of HisF.</text>
</comment>
<comment type="catalytic activity">
    <reaction evidence="1">
        <text>5-[(5-phospho-1-deoxy-D-ribulos-1-ylimino)methylamino]-1-(5-phospho-beta-D-ribosyl)imidazole-4-carboxamide + L-glutamine = D-erythro-1-(imidazol-4-yl)glycerol 3-phosphate + 5-amino-1-(5-phospho-beta-D-ribosyl)imidazole-4-carboxamide + L-glutamate + H(+)</text>
        <dbReference type="Rhea" id="RHEA:24793"/>
        <dbReference type="ChEBI" id="CHEBI:15378"/>
        <dbReference type="ChEBI" id="CHEBI:29985"/>
        <dbReference type="ChEBI" id="CHEBI:58278"/>
        <dbReference type="ChEBI" id="CHEBI:58359"/>
        <dbReference type="ChEBI" id="CHEBI:58475"/>
        <dbReference type="ChEBI" id="CHEBI:58525"/>
        <dbReference type="EC" id="4.3.2.10"/>
    </reaction>
</comment>
<comment type="catalytic activity">
    <reaction evidence="1">
        <text>L-glutamine + H2O = L-glutamate + NH4(+)</text>
        <dbReference type="Rhea" id="RHEA:15889"/>
        <dbReference type="ChEBI" id="CHEBI:15377"/>
        <dbReference type="ChEBI" id="CHEBI:28938"/>
        <dbReference type="ChEBI" id="CHEBI:29985"/>
        <dbReference type="ChEBI" id="CHEBI:58359"/>
        <dbReference type="EC" id="3.5.1.2"/>
    </reaction>
</comment>
<comment type="pathway">
    <text evidence="1">Amino-acid biosynthesis; L-histidine biosynthesis; L-histidine from 5-phospho-alpha-D-ribose 1-diphosphate: step 5/9.</text>
</comment>
<comment type="subunit">
    <text evidence="1">Heterodimer of HisH and HisF.</text>
</comment>
<comment type="subcellular location">
    <subcellularLocation>
        <location evidence="1">Cytoplasm</location>
    </subcellularLocation>
</comment>
<feature type="chain" id="PRO_0000231703" description="Imidazole glycerol phosphate synthase subunit HisH">
    <location>
        <begin position="1"/>
        <end position="212"/>
    </location>
</feature>
<feature type="domain" description="Glutamine amidotransferase type-1" evidence="1">
    <location>
        <begin position="1"/>
        <end position="211"/>
    </location>
</feature>
<feature type="active site" description="Nucleophile" evidence="1">
    <location>
        <position position="79"/>
    </location>
</feature>
<feature type="active site" evidence="1">
    <location>
        <position position="186"/>
    </location>
</feature>
<feature type="active site" evidence="1">
    <location>
        <position position="188"/>
    </location>
</feature>
<protein>
    <recommendedName>
        <fullName evidence="1">Imidazole glycerol phosphate synthase subunit HisH</fullName>
        <ecNumber evidence="1">4.3.2.10</ecNumber>
    </recommendedName>
    <alternativeName>
        <fullName evidence="1">IGP synthase glutaminase subunit</fullName>
        <ecNumber evidence="1">3.5.1.2</ecNumber>
    </alternativeName>
    <alternativeName>
        <fullName evidence="1">IGP synthase subunit HisH</fullName>
    </alternativeName>
    <alternativeName>
        <fullName evidence="1">ImGP synthase subunit HisH</fullName>
        <shortName evidence="1">IGPS subunit HisH</shortName>
    </alternativeName>
</protein>
<proteinExistence type="inferred from homology"/>
<gene>
    <name evidence="1" type="primary">hisH</name>
    <name type="ordered locus">BLi03734</name>
    <name type="ordered locus">BL03410</name>
</gene>
<name>HIS5_BACLD</name>